<protein>
    <recommendedName>
        <fullName evidence="2">D-alanine--D-alanine ligase</fullName>
        <ecNumber evidence="2">6.3.2.4</ecNumber>
    </recommendedName>
    <alternativeName>
        <fullName evidence="2">D-Ala-D-Ala ligase</fullName>
    </alternativeName>
    <alternativeName>
        <fullName evidence="2">D-alanylalanine synthetase</fullName>
    </alternativeName>
</protein>
<comment type="function">
    <text evidence="2">Cell wall formation.</text>
</comment>
<comment type="catalytic activity">
    <reaction evidence="2">
        <text>2 D-alanine + ATP = D-alanyl-D-alanine + ADP + phosphate + H(+)</text>
        <dbReference type="Rhea" id="RHEA:11224"/>
        <dbReference type="ChEBI" id="CHEBI:15378"/>
        <dbReference type="ChEBI" id="CHEBI:30616"/>
        <dbReference type="ChEBI" id="CHEBI:43474"/>
        <dbReference type="ChEBI" id="CHEBI:57416"/>
        <dbReference type="ChEBI" id="CHEBI:57822"/>
        <dbReference type="ChEBI" id="CHEBI:456216"/>
        <dbReference type="EC" id="6.3.2.4"/>
    </reaction>
</comment>
<comment type="cofactor">
    <cofactor evidence="1">
        <name>Mg(2+)</name>
        <dbReference type="ChEBI" id="CHEBI:18420"/>
    </cofactor>
    <cofactor evidence="1">
        <name>Mn(2+)</name>
        <dbReference type="ChEBI" id="CHEBI:29035"/>
    </cofactor>
    <text evidence="1">Binds 2 magnesium or manganese ions per subunit.</text>
</comment>
<comment type="pathway">
    <text evidence="2">Cell wall biogenesis; peptidoglycan biosynthesis.</text>
</comment>
<comment type="subcellular location">
    <subcellularLocation>
        <location evidence="2">Cytoplasm</location>
    </subcellularLocation>
</comment>
<comment type="similarity">
    <text evidence="2">Belongs to the D-alanine--D-alanine ligase family.</text>
</comment>
<reference key="1">
    <citation type="journal article" date="2003" name="Proc. Natl. Acad. Sci. U.S.A.">
        <title>Complete genome sequence and analysis of Wolinella succinogenes.</title>
        <authorList>
            <person name="Baar C."/>
            <person name="Eppinger M."/>
            <person name="Raddatz G."/>
            <person name="Simon J."/>
            <person name="Lanz C."/>
            <person name="Klimmek O."/>
            <person name="Nandakumar R."/>
            <person name="Gross R."/>
            <person name="Rosinus A."/>
            <person name="Keller H."/>
            <person name="Jagtap P."/>
            <person name="Linke B."/>
            <person name="Meyer F."/>
            <person name="Lederer H."/>
            <person name="Schuster S.C."/>
        </authorList>
    </citation>
    <scope>NUCLEOTIDE SEQUENCE [LARGE SCALE GENOMIC DNA]</scope>
    <source>
        <strain>ATCC 29543 / DSM 1740 / CCUG 13145 / JCM 31913 / LMG 7466 / NCTC 11488 / FDC 602W</strain>
    </source>
</reference>
<feature type="chain" id="PRO_0000177906" description="D-alanine--D-alanine ligase">
    <location>
        <begin position="1"/>
        <end position="345"/>
    </location>
</feature>
<feature type="domain" description="ATP-grasp" evidence="2">
    <location>
        <begin position="133"/>
        <end position="340"/>
    </location>
</feature>
<feature type="binding site" evidence="2">
    <location>
        <begin position="162"/>
        <end position="211"/>
    </location>
    <ligand>
        <name>ATP</name>
        <dbReference type="ChEBI" id="CHEBI:30616"/>
    </ligand>
</feature>
<feature type="binding site" evidence="2">
    <location>
        <position position="284"/>
    </location>
    <ligand>
        <name>Mg(2+)</name>
        <dbReference type="ChEBI" id="CHEBI:18420"/>
        <label>1</label>
    </ligand>
</feature>
<feature type="binding site" evidence="2">
    <location>
        <position position="296"/>
    </location>
    <ligand>
        <name>Mg(2+)</name>
        <dbReference type="ChEBI" id="CHEBI:18420"/>
        <label>1</label>
    </ligand>
</feature>
<feature type="binding site" evidence="2">
    <location>
        <position position="296"/>
    </location>
    <ligand>
        <name>Mg(2+)</name>
        <dbReference type="ChEBI" id="CHEBI:18420"/>
        <label>2</label>
    </ligand>
</feature>
<feature type="binding site" evidence="2">
    <location>
        <position position="298"/>
    </location>
    <ligand>
        <name>Mg(2+)</name>
        <dbReference type="ChEBI" id="CHEBI:18420"/>
        <label>2</label>
    </ligand>
</feature>
<proteinExistence type="inferred from homology"/>
<name>DDL_WOLSU</name>
<evidence type="ECO:0000250" key="1"/>
<evidence type="ECO:0000255" key="2">
    <source>
        <dbReference type="HAMAP-Rule" id="MF_00047"/>
    </source>
</evidence>
<keyword id="KW-0067">ATP-binding</keyword>
<keyword id="KW-0133">Cell shape</keyword>
<keyword id="KW-0961">Cell wall biogenesis/degradation</keyword>
<keyword id="KW-0963">Cytoplasm</keyword>
<keyword id="KW-0436">Ligase</keyword>
<keyword id="KW-0460">Magnesium</keyword>
<keyword id="KW-0464">Manganese</keyword>
<keyword id="KW-0479">Metal-binding</keyword>
<keyword id="KW-0547">Nucleotide-binding</keyword>
<keyword id="KW-0573">Peptidoglycan synthesis</keyword>
<keyword id="KW-1185">Reference proteome</keyword>
<accession>Q7MA71</accession>
<gene>
    <name evidence="2" type="primary">ddl</name>
    <name type="synonym">ddlA</name>
    <name type="ordered locus">WS0438</name>
</gene>
<sequence length="345" mass="39594">MNLAVIFGGASYEHEISIVSAISLKKILPALEHFIFVDGNRDFYWIPASEMRSKHFADGIYKKNPKLFLRPGGFYAKGLWGEKRVPFDTALNLIHGGDGEDGKLASLLEFFRIPFIGPRIEASVMSFNKHLTKLYAKERGVKTLPYLLARKNEKREFGNEFPLIVKPLRLGSSIGVSIAKNRQELDYALDVAFEFDEAALLEPFMQGIKEYNLAGCKINGEYHFSIIEEPQKKEFLDFDKKYLDFSRTQKLLKADLSEASERLLKEAFIKLYDDSFEGSLIRCDFFVQNQEVFLNEINPIPGSLANYLFEDFPKILQSLAHNLPKERGIKIDYRYIHQIQKAKGK</sequence>
<organism>
    <name type="scientific">Wolinella succinogenes (strain ATCC 29543 / DSM 1740 / CCUG 13145 / JCM 31913 / LMG 7466 / NCTC 11488 / FDC 602W)</name>
    <name type="common">Vibrio succinogenes</name>
    <dbReference type="NCBI Taxonomy" id="273121"/>
    <lineage>
        <taxon>Bacteria</taxon>
        <taxon>Pseudomonadati</taxon>
        <taxon>Campylobacterota</taxon>
        <taxon>Epsilonproteobacteria</taxon>
        <taxon>Campylobacterales</taxon>
        <taxon>Helicobacteraceae</taxon>
        <taxon>Wolinella</taxon>
    </lineage>
</organism>
<dbReference type="EC" id="6.3.2.4" evidence="2"/>
<dbReference type="EMBL" id="BX571658">
    <property type="protein sequence ID" value="CAE09580.1"/>
    <property type="molecule type" value="Genomic_DNA"/>
</dbReference>
<dbReference type="RefSeq" id="WP_011138380.1">
    <property type="nucleotide sequence ID" value="NC_005090.1"/>
</dbReference>
<dbReference type="SMR" id="Q7MA71"/>
<dbReference type="STRING" id="273121.WS0438"/>
<dbReference type="KEGG" id="wsu:WS0438"/>
<dbReference type="eggNOG" id="COG1181">
    <property type="taxonomic scope" value="Bacteria"/>
</dbReference>
<dbReference type="HOGENOM" id="CLU_039268_0_2_7"/>
<dbReference type="UniPathway" id="UPA00219"/>
<dbReference type="Proteomes" id="UP000000422">
    <property type="component" value="Chromosome"/>
</dbReference>
<dbReference type="GO" id="GO:0005737">
    <property type="term" value="C:cytoplasm"/>
    <property type="evidence" value="ECO:0007669"/>
    <property type="project" value="UniProtKB-SubCell"/>
</dbReference>
<dbReference type="GO" id="GO:0005524">
    <property type="term" value="F:ATP binding"/>
    <property type="evidence" value="ECO:0007669"/>
    <property type="project" value="UniProtKB-KW"/>
</dbReference>
<dbReference type="GO" id="GO:0008716">
    <property type="term" value="F:D-alanine-D-alanine ligase activity"/>
    <property type="evidence" value="ECO:0007669"/>
    <property type="project" value="UniProtKB-UniRule"/>
</dbReference>
<dbReference type="GO" id="GO:0046872">
    <property type="term" value="F:metal ion binding"/>
    <property type="evidence" value="ECO:0007669"/>
    <property type="project" value="UniProtKB-KW"/>
</dbReference>
<dbReference type="GO" id="GO:0071555">
    <property type="term" value="P:cell wall organization"/>
    <property type="evidence" value="ECO:0007669"/>
    <property type="project" value="UniProtKB-KW"/>
</dbReference>
<dbReference type="GO" id="GO:0009252">
    <property type="term" value="P:peptidoglycan biosynthetic process"/>
    <property type="evidence" value="ECO:0007669"/>
    <property type="project" value="UniProtKB-UniRule"/>
</dbReference>
<dbReference type="GO" id="GO:0008360">
    <property type="term" value="P:regulation of cell shape"/>
    <property type="evidence" value="ECO:0007669"/>
    <property type="project" value="UniProtKB-KW"/>
</dbReference>
<dbReference type="Gene3D" id="3.40.50.20">
    <property type="match status" value="1"/>
</dbReference>
<dbReference type="Gene3D" id="3.30.1490.20">
    <property type="entry name" value="ATP-grasp fold, A domain"/>
    <property type="match status" value="1"/>
</dbReference>
<dbReference type="Gene3D" id="3.30.470.20">
    <property type="entry name" value="ATP-grasp fold, B domain"/>
    <property type="match status" value="1"/>
</dbReference>
<dbReference type="HAMAP" id="MF_00047">
    <property type="entry name" value="Dala_Dala_lig"/>
    <property type="match status" value="1"/>
</dbReference>
<dbReference type="InterPro" id="IPR011761">
    <property type="entry name" value="ATP-grasp"/>
</dbReference>
<dbReference type="InterPro" id="IPR013815">
    <property type="entry name" value="ATP_grasp_subdomain_1"/>
</dbReference>
<dbReference type="InterPro" id="IPR000291">
    <property type="entry name" value="D-Ala_lig_Van_CS"/>
</dbReference>
<dbReference type="InterPro" id="IPR005905">
    <property type="entry name" value="D_ala_D_ala"/>
</dbReference>
<dbReference type="InterPro" id="IPR011095">
    <property type="entry name" value="Dala_Dala_lig_C"/>
</dbReference>
<dbReference type="InterPro" id="IPR011127">
    <property type="entry name" value="Dala_Dala_lig_N"/>
</dbReference>
<dbReference type="InterPro" id="IPR016185">
    <property type="entry name" value="PreATP-grasp_dom_sf"/>
</dbReference>
<dbReference type="NCBIfam" id="TIGR01205">
    <property type="entry name" value="D_ala_D_alaTIGR"/>
    <property type="match status" value="1"/>
</dbReference>
<dbReference type="NCBIfam" id="NF002527">
    <property type="entry name" value="PRK01966.1-3"/>
    <property type="match status" value="1"/>
</dbReference>
<dbReference type="PANTHER" id="PTHR23132">
    <property type="entry name" value="D-ALANINE--D-ALANINE LIGASE"/>
    <property type="match status" value="1"/>
</dbReference>
<dbReference type="PANTHER" id="PTHR23132:SF23">
    <property type="entry name" value="D-ALANINE--D-ALANINE LIGASE B"/>
    <property type="match status" value="1"/>
</dbReference>
<dbReference type="Pfam" id="PF07478">
    <property type="entry name" value="Dala_Dala_lig_C"/>
    <property type="match status" value="1"/>
</dbReference>
<dbReference type="Pfam" id="PF01820">
    <property type="entry name" value="Dala_Dala_lig_N"/>
    <property type="match status" value="1"/>
</dbReference>
<dbReference type="SUPFAM" id="SSF56059">
    <property type="entry name" value="Glutathione synthetase ATP-binding domain-like"/>
    <property type="match status" value="1"/>
</dbReference>
<dbReference type="SUPFAM" id="SSF52440">
    <property type="entry name" value="PreATP-grasp domain"/>
    <property type="match status" value="1"/>
</dbReference>
<dbReference type="PROSITE" id="PS50975">
    <property type="entry name" value="ATP_GRASP"/>
    <property type="match status" value="1"/>
</dbReference>
<dbReference type="PROSITE" id="PS00843">
    <property type="entry name" value="DALA_DALA_LIGASE_1"/>
    <property type="match status" value="1"/>
</dbReference>
<dbReference type="PROSITE" id="PS00844">
    <property type="entry name" value="DALA_DALA_LIGASE_2"/>
    <property type="match status" value="1"/>
</dbReference>